<organism>
    <name type="scientific">Mus musculus</name>
    <name type="common">Mouse</name>
    <dbReference type="NCBI Taxonomy" id="10090"/>
    <lineage>
        <taxon>Eukaryota</taxon>
        <taxon>Metazoa</taxon>
        <taxon>Chordata</taxon>
        <taxon>Craniata</taxon>
        <taxon>Vertebrata</taxon>
        <taxon>Euteleostomi</taxon>
        <taxon>Mammalia</taxon>
        <taxon>Eutheria</taxon>
        <taxon>Euarchontoglires</taxon>
        <taxon>Glires</taxon>
        <taxon>Rodentia</taxon>
        <taxon>Myomorpha</taxon>
        <taxon>Muroidea</taxon>
        <taxon>Muridae</taxon>
        <taxon>Murinae</taxon>
        <taxon>Mus</taxon>
        <taxon>Mus</taxon>
    </lineage>
</organism>
<name>TSR2_MOUSE</name>
<feature type="chain" id="PRO_0000285588" description="Pre-rRNA-processing protein TSR2 homolog">
    <location>
        <begin position="1"/>
        <end position="191"/>
    </location>
</feature>
<feature type="region of interest" description="Disordered" evidence="1">
    <location>
        <begin position="140"/>
        <end position="175"/>
    </location>
</feature>
<protein>
    <recommendedName>
        <fullName>Pre-rRNA-processing protein TSR2 homolog</fullName>
    </recommendedName>
</protein>
<gene>
    <name type="primary">Tsr2</name>
</gene>
<dbReference type="EMBL" id="AK044504">
    <property type="protein sequence ID" value="BAC31955.1"/>
    <property type="molecule type" value="mRNA"/>
</dbReference>
<dbReference type="EMBL" id="AL805937">
    <property type="protein sequence ID" value="CAM14872.1"/>
    <property type="status" value="ALT_INIT"/>
    <property type="molecule type" value="Genomic_DNA"/>
</dbReference>
<dbReference type="EMBL" id="BC025008">
    <property type="protein sequence ID" value="AAH25008.1"/>
    <property type="molecule type" value="mRNA"/>
</dbReference>
<dbReference type="EMBL" id="BC049668">
    <property type="protein sequence ID" value="AAH49668.1"/>
    <property type="molecule type" value="mRNA"/>
</dbReference>
<dbReference type="RefSeq" id="NP_780355.2">
    <property type="nucleotide sequence ID" value="NM_175146.4"/>
</dbReference>
<dbReference type="SMR" id="Q8C8T8"/>
<dbReference type="BioGRID" id="213486">
    <property type="interactions" value="15"/>
</dbReference>
<dbReference type="FunCoup" id="Q8C8T8">
    <property type="interactions" value="1775"/>
</dbReference>
<dbReference type="STRING" id="10090.ENSMUSP00000026295"/>
<dbReference type="iPTMnet" id="Q8C8T8"/>
<dbReference type="PhosphoSitePlus" id="Q8C8T8"/>
<dbReference type="SwissPalm" id="Q8C8T8"/>
<dbReference type="PaxDb" id="10090-ENSMUSP00000108303"/>
<dbReference type="PeptideAtlas" id="Q8C8T8"/>
<dbReference type="ProteomicsDB" id="298000"/>
<dbReference type="Pumba" id="Q8C8T8"/>
<dbReference type="TopDownProteomics" id="Q8C8T8"/>
<dbReference type="DNASU" id="69499"/>
<dbReference type="GeneID" id="69499"/>
<dbReference type="KEGG" id="mmu:69499"/>
<dbReference type="UCSC" id="uc009uoy.2">
    <property type="organism name" value="mouse"/>
</dbReference>
<dbReference type="AGR" id="MGI:1916749"/>
<dbReference type="CTD" id="90121"/>
<dbReference type="MGI" id="MGI:1916749">
    <property type="gene designation" value="Tsr2"/>
</dbReference>
<dbReference type="eggNOG" id="KOG4032">
    <property type="taxonomic scope" value="Eukaryota"/>
</dbReference>
<dbReference type="InParanoid" id="Q8C8T8"/>
<dbReference type="OMA" id="QSNWGGP"/>
<dbReference type="OrthoDB" id="263560at2759"/>
<dbReference type="PhylomeDB" id="Q8C8T8"/>
<dbReference type="TreeFam" id="TF314018"/>
<dbReference type="BioGRID-ORCS" id="69499">
    <property type="hits" value="27 hits in 80 CRISPR screens"/>
</dbReference>
<dbReference type="PRO" id="PR:Q8C8T8"/>
<dbReference type="Proteomes" id="UP000000589">
    <property type="component" value="Unplaced"/>
</dbReference>
<dbReference type="RNAct" id="Q8C8T8">
    <property type="molecule type" value="protein"/>
</dbReference>
<dbReference type="GO" id="GO:0006364">
    <property type="term" value="P:rRNA processing"/>
    <property type="evidence" value="ECO:0007669"/>
    <property type="project" value="UniProtKB-KW"/>
</dbReference>
<dbReference type="InterPro" id="IPR019398">
    <property type="entry name" value="Pre-rRNA_process_TSR2"/>
</dbReference>
<dbReference type="PANTHER" id="PTHR21250">
    <property type="entry name" value="PRE-RRNA-PROCESSING PROTEIN TSR2 HOMOLOG"/>
    <property type="match status" value="1"/>
</dbReference>
<dbReference type="Pfam" id="PF10273">
    <property type="entry name" value="WGG"/>
    <property type="match status" value="1"/>
</dbReference>
<evidence type="ECO:0000256" key="1">
    <source>
        <dbReference type="SAM" id="MobiDB-lite"/>
    </source>
</evidence>
<evidence type="ECO:0000305" key="2"/>
<sequence>MAGAAEDVRVLFGAAVRAALEAWPALQIAVENGFGGVHSQEKAEWLGGAVEDYFIANADLELEEIEDFLGELMTTEFDTVVEDGSLPQVSQQLQTMFHHFQKGDGAALQEMTSQINQKKCKVTATPLMTAKETDVAEDDVDSVEEMEVTATNDGATTDEVCPQPQPSDPDTQTIKEEDIVEDGWTIVRRKK</sequence>
<accession>Q8C8T8</accession>
<accession>A2ALP6</accession>
<accession>Q8R3M9</accession>
<reference key="1">
    <citation type="journal article" date="2005" name="Science">
        <title>The transcriptional landscape of the mammalian genome.</title>
        <authorList>
            <person name="Carninci P."/>
            <person name="Kasukawa T."/>
            <person name="Katayama S."/>
            <person name="Gough J."/>
            <person name="Frith M.C."/>
            <person name="Maeda N."/>
            <person name="Oyama R."/>
            <person name="Ravasi T."/>
            <person name="Lenhard B."/>
            <person name="Wells C."/>
            <person name="Kodzius R."/>
            <person name="Shimokawa K."/>
            <person name="Bajic V.B."/>
            <person name="Brenner S.E."/>
            <person name="Batalov S."/>
            <person name="Forrest A.R."/>
            <person name="Zavolan M."/>
            <person name="Davis M.J."/>
            <person name="Wilming L.G."/>
            <person name="Aidinis V."/>
            <person name="Allen J.E."/>
            <person name="Ambesi-Impiombato A."/>
            <person name="Apweiler R."/>
            <person name="Aturaliya R.N."/>
            <person name="Bailey T.L."/>
            <person name="Bansal M."/>
            <person name="Baxter L."/>
            <person name="Beisel K.W."/>
            <person name="Bersano T."/>
            <person name="Bono H."/>
            <person name="Chalk A.M."/>
            <person name="Chiu K.P."/>
            <person name="Choudhary V."/>
            <person name="Christoffels A."/>
            <person name="Clutterbuck D.R."/>
            <person name="Crowe M.L."/>
            <person name="Dalla E."/>
            <person name="Dalrymple B.P."/>
            <person name="de Bono B."/>
            <person name="Della Gatta G."/>
            <person name="di Bernardo D."/>
            <person name="Down T."/>
            <person name="Engstrom P."/>
            <person name="Fagiolini M."/>
            <person name="Faulkner G."/>
            <person name="Fletcher C.F."/>
            <person name="Fukushima T."/>
            <person name="Furuno M."/>
            <person name="Futaki S."/>
            <person name="Gariboldi M."/>
            <person name="Georgii-Hemming P."/>
            <person name="Gingeras T.R."/>
            <person name="Gojobori T."/>
            <person name="Green R.E."/>
            <person name="Gustincich S."/>
            <person name="Harbers M."/>
            <person name="Hayashi Y."/>
            <person name="Hensch T.K."/>
            <person name="Hirokawa N."/>
            <person name="Hill D."/>
            <person name="Huminiecki L."/>
            <person name="Iacono M."/>
            <person name="Ikeo K."/>
            <person name="Iwama A."/>
            <person name="Ishikawa T."/>
            <person name="Jakt M."/>
            <person name="Kanapin A."/>
            <person name="Katoh M."/>
            <person name="Kawasawa Y."/>
            <person name="Kelso J."/>
            <person name="Kitamura H."/>
            <person name="Kitano H."/>
            <person name="Kollias G."/>
            <person name="Krishnan S.P."/>
            <person name="Kruger A."/>
            <person name="Kummerfeld S.K."/>
            <person name="Kurochkin I.V."/>
            <person name="Lareau L.F."/>
            <person name="Lazarevic D."/>
            <person name="Lipovich L."/>
            <person name="Liu J."/>
            <person name="Liuni S."/>
            <person name="McWilliam S."/>
            <person name="Madan Babu M."/>
            <person name="Madera M."/>
            <person name="Marchionni L."/>
            <person name="Matsuda H."/>
            <person name="Matsuzawa S."/>
            <person name="Miki H."/>
            <person name="Mignone F."/>
            <person name="Miyake S."/>
            <person name="Morris K."/>
            <person name="Mottagui-Tabar S."/>
            <person name="Mulder N."/>
            <person name="Nakano N."/>
            <person name="Nakauchi H."/>
            <person name="Ng P."/>
            <person name="Nilsson R."/>
            <person name="Nishiguchi S."/>
            <person name="Nishikawa S."/>
            <person name="Nori F."/>
            <person name="Ohara O."/>
            <person name="Okazaki Y."/>
            <person name="Orlando V."/>
            <person name="Pang K.C."/>
            <person name="Pavan W.J."/>
            <person name="Pavesi G."/>
            <person name="Pesole G."/>
            <person name="Petrovsky N."/>
            <person name="Piazza S."/>
            <person name="Reed J."/>
            <person name="Reid J.F."/>
            <person name="Ring B.Z."/>
            <person name="Ringwald M."/>
            <person name="Rost B."/>
            <person name="Ruan Y."/>
            <person name="Salzberg S.L."/>
            <person name="Sandelin A."/>
            <person name="Schneider C."/>
            <person name="Schoenbach C."/>
            <person name="Sekiguchi K."/>
            <person name="Semple C.A."/>
            <person name="Seno S."/>
            <person name="Sessa L."/>
            <person name="Sheng Y."/>
            <person name="Shibata Y."/>
            <person name="Shimada H."/>
            <person name="Shimada K."/>
            <person name="Silva D."/>
            <person name="Sinclair B."/>
            <person name="Sperling S."/>
            <person name="Stupka E."/>
            <person name="Sugiura K."/>
            <person name="Sultana R."/>
            <person name="Takenaka Y."/>
            <person name="Taki K."/>
            <person name="Tammoja K."/>
            <person name="Tan S.L."/>
            <person name="Tang S."/>
            <person name="Taylor M.S."/>
            <person name="Tegner J."/>
            <person name="Teichmann S.A."/>
            <person name="Ueda H.R."/>
            <person name="van Nimwegen E."/>
            <person name="Verardo R."/>
            <person name="Wei C.L."/>
            <person name="Yagi K."/>
            <person name="Yamanishi H."/>
            <person name="Zabarovsky E."/>
            <person name="Zhu S."/>
            <person name="Zimmer A."/>
            <person name="Hide W."/>
            <person name="Bult C."/>
            <person name="Grimmond S.M."/>
            <person name="Teasdale R.D."/>
            <person name="Liu E.T."/>
            <person name="Brusic V."/>
            <person name="Quackenbush J."/>
            <person name="Wahlestedt C."/>
            <person name="Mattick J.S."/>
            <person name="Hume D.A."/>
            <person name="Kai C."/>
            <person name="Sasaki D."/>
            <person name="Tomaru Y."/>
            <person name="Fukuda S."/>
            <person name="Kanamori-Katayama M."/>
            <person name="Suzuki M."/>
            <person name="Aoki J."/>
            <person name="Arakawa T."/>
            <person name="Iida J."/>
            <person name="Imamura K."/>
            <person name="Itoh M."/>
            <person name="Kato T."/>
            <person name="Kawaji H."/>
            <person name="Kawagashira N."/>
            <person name="Kawashima T."/>
            <person name="Kojima M."/>
            <person name="Kondo S."/>
            <person name="Konno H."/>
            <person name="Nakano K."/>
            <person name="Ninomiya N."/>
            <person name="Nishio T."/>
            <person name="Okada M."/>
            <person name="Plessy C."/>
            <person name="Shibata K."/>
            <person name="Shiraki T."/>
            <person name="Suzuki S."/>
            <person name="Tagami M."/>
            <person name="Waki K."/>
            <person name="Watahiki A."/>
            <person name="Okamura-Oho Y."/>
            <person name="Suzuki H."/>
            <person name="Kawai J."/>
            <person name="Hayashizaki Y."/>
        </authorList>
    </citation>
    <scope>NUCLEOTIDE SEQUENCE [LARGE SCALE MRNA]</scope>
    <source>
        <strain>C57BL/6J</strain>
        <tissue>Retina</tissue>
    </source>
</reference>
<reference key="2">
    <citation type="journal article" date="2009" name="PLoS Biol.">
        <title>Lineage-specific biology revealed by a finished genome assembly of the mouse.</title>
        <authorList>
            <person name="Church D.M."/>
            <person name="Goodstadt L."/>
            <person name="Hillier L.W."/>
            <person name="Zody M.C."/>
            <person name="Goldstein S."/>
            <person name="She X."/>
            <person name="Bult C.J."/>
            <person name="Agarwala R."/>
            <person name="Cherry J.L."/>
            <person name="DiCuccio M."/>
            <person name="Hlavina W."/>
            <person name="Kapustin Y."/>
            <person name="Meric P."/>
            <person name="Maglott D."/>
            <person name="Birtle Z."/>
            <person name="Marques A.C."/>
            <person name="Graves T."/>
            <person name="Zhou S."/>
            <person name="Teague B."/>
            <person name="Potamousis K."/>
            <person name="Churas C."/>
            <person name="Place M."/>
            <person name="Herschleb J."/>
            <person name="Runnheim R."/>
            <person name="Forrest D."/>
            <person name="Amos-Landgraf J."/>
            <person name="Schwartz D.C."/>
            <person name="Cheng Z."/>
            <person name="Lindblad-Toh K."/>
            <person name="Eichler E.E."/>
            <person name="Ponting C.P."/>
        </authorList>
    </citation>
    <scope>NUCLEOTIDE SEQUENCE [LARGE SCALE GENOMIC DNA]</scope>
    <source>
        <strain>C57BL/6J</strain>
    </source>
</reference>
<reference key="3">
    <citation type="journal article" date="2004" name="Genome Res.">
        <title>The status, quality, and expansion of the NIH full-length cDNA project: the Mammalian Gene Collection (MGC).</title>
        <authorList>
            <consortium name="The MGC Project Team"/>
        </authorList>
    </citation>
    <scope>NUCLEOTIDE SEQUENCE [LARGE SCALE MRNA]</scope>
    <source>
        <strain>FVB/N-3</strain>
        <tissue>Brain</tissue>
        <tissue>Mammary tumor</tissue>
    </source>
</reference>
<reference key="4">
    <citation type="journal article" date="2010" name="Cell">
        <title>A tissue-specific atlas of mouse protein phosphorylation and expression.</title>
        <authorList>
            <person name="Huttlin E.L."/>
            <person name="Jedrychowski M.P."/>
            <person name="Elias J.E."/>
            <person name="Goswami T."/>
            <person name="Rad R."/>
            <person name="Beausoleil S.A."/>
            <person name="Villen J."/>
            <person name="Haas W."/>
            <person name="Sowa M.E."/>
            <person name="Gygi S.P."/>
        </authorList>
    </citation>
    <scope>IDENTIFICATION BY MASS SPECTROMETRY [LARGE SCALE ANALYSIS]</scope>
    <source>
        <tissue>Brain</tissue>
        <tissue>Kidney</tissue>
        <tissue>Liver</tissue>
        <tissue>Lung</tissue>
        <tissue>Spleen</tissue>
    </source>
</reference>
<proteinExistence type="evidence at protein level"/>
<keyword id="KW-1185">Reference proteome</keyword>
<keyword id="KW-0698">rRNA processing</keyword>
<comment type="function">
    <text evidence="2">May be involved in 20S pre-rRNA processing.</text>
</comment>
<comment type="similarity">
    <text evidence="2">Belongs to the TSR2 family.</text>
</comment>
<comment type="sequence caution" evidence="2">
    <conflict type="erroneous initiation">
        <sequence resource="EMBL-CDS" id="CAM14872"/>
    </conflict>
</comment>